<organism>
    <name type="scientific">Schizosaccharomyces pombe (strain 972 / ATCC 24843)</name>
    <name type="common">Fission yeast</name>
    <dbReference type="NCBI Taxonomy" id="284812"/>
    <lineage>
        <taxon>Eukaryota</taxon>
        <taxon>Fungi</taxon>
        <taxon>Dikarya</taxon>
        <taxon>Ascomycota</taxon>
        <taxon>Taphrinomycotina</taxon>
        <taxon>Schizosaccharomycetes</taxon>
        <taxon>Schizosaccharomycetales</taxon>
        <taxon>Schizosaccharomycetaceae</taxon>
        <taxon>Schizosaccharomyces</taxon>
    </lineage>
</organism>
<keyword id="KW-0903">Direct protein sequencing</keyword>
<keyword id="KW-0489">Methyltransferase</keyword>
<keyword id="KW-0506">mRNA capping</keyword>
<keyword id="KW-0507">mRNA processing</keyword>
<keyword id="KW-0539">Nucleus</keyword>
<keyword id="KW-1185">Reference proteome</keyword>
<keyword id="KW-0694">RNA-binding</keyword>
<keyword id="KW-0949">S-adenosyl-L-methionine</keyword>
<keyword id="KW-0808">Transferase</keyword>
<dbReference type="EC" id="2.1.1.56" evidence="1"/>
<dbReference type="EMBL" id="CU329672">
    <property type="protein sequence ID" value="CAA20915.2"/>
    <property type="molecule type" value="Genomic_DNA"/>
</dbReference>
<dbReference type="PIR" id="T41320">
    <property type="entry name" value="T41320"/>
</dbReference>
<dbReference type="RefSeq" id="NP_587710.2">
    <property type="nucleotide sequence ID" value="NM_001022705.2"/>
</dbReference>
<dbReference type="SMR" id="O74880"/>
<dbReference type="BioGRID" id="275848">
    <property type="interactions" value="4"/>
</dbReference>
<dbReference type="FunCoup" id="O74880">
    <property type="interactions" value="828"/>
</dbReference>
<dbReference type="IntAct" id="O74880">
    <property type="interactions" value="1"/>
</dbReference>
<dbReference type="MINT" id="O74880"/>
<dbReference type="STRING" id="284812.O74880"/>
<dbReference type="iPTMnet" id="O74880"/>
<dbReference type="PaxDb" id="4896-SPCC330.10.1"/>
<dbReference type="EnsemblFungi" id="SPCC330.10.1">
    <property type="protein sequence ID" value="SPCC330.10.1:pep"/>
    <property type="gene ID" value="SPCC330.10"/>
</dbReference>
<dbReference type="PomBase" id="SPCC330.10">
    <property type="gene designation" value="pcm1"/>
</dbReference>
<dbReference type="VEuPathDB" id="FungiDB:SPCC330.10"/>
<dbReference type="eggNOG" id="KOG1975">
    <property type="taxonomic scope" value="Eukaryota"/>
</dbReference>
<dbReference type="HOGENOM" id="CLU_020346_2_2_1"/>
<dbReference type="InParanoid" id="O74880"/>
<dbReference type="OMA" id="LITGDCF"/>
<dbReference type="Reactome" id="R-SPO-72086">
    <property type="pathway name" value="mRNA Capping"/>
</dbReference>
<dbReference type="Reactome" id="R-SPO-77075">
    <property type="pathway name" value="RNA Pol II CTD phosphorylation and interaction with CE"/>
</dbReference>
<dbReference type="PRO" id="PR:O74880"/>
<dbReference type="Proteomes" id="UP000002485">
    <property type="component" value="Chromosome III"/>
</dbReference>
<dbReference type="GO" id="GO:0005634">
    <property type="term" value="C:nucleus"/>
    <property type="evidence" value="ECO:0000316"/>
    <property type="project" value="PomBase"/>
</dbReference>
<dbReference type="GO" id="GO:0070693">
    <property type="term" value="C:P-TEFb-cap methyltransferase complex"/>
    <property type="evidence" value="ECO:0000314"/>
    <property type="project" value="PomBase"/>
</dbReference>
<dbReference type="GO" id="GO:0004482">
    <property type="term" value="F:mRNA 5'-cap (guanine-N7-)-methyltransferase activity"/>
    <property type="evidence" value="ECO:0000316"/>
    <property type="project" value="PomBase"/>
</dbReference>
<dbReference type="GO" id="GO:0003723">
    <property type="term" value="F:RNA binding"/>
    <property type="evidence" value="ECO:0007669"/>
    <property type="project" value="UniProtKB-KW"/>
</dbReference>
<dbReference type="GO" id="GO:0006370">
    <property type="term" value="P:7-methylguanosine mRNA capping"/>
    <property type="evidence" value="ECO:0000316"/>
    <property type="project" value="PomBase"/>
</dbReference>
<dbReference type="CDD" id="cd02440">
    <property type="entry name" value="AdoMet_MTases"/>
    <property type="match status" value="1"/>
</dbReference>
<dbReference type="Gene3D" id="3.40.50.150">
    <property type="entry name" value="Vaccinia Virus protein VP39"/>
    <property type="match status" value="1"/>
</dbReference>
<dbReference type="InterPro" id="IPR004971">
    <property type="entry name" value="mRNA_G-N7_MeTrfase_dom"/>
</dbReference>
<dbReference type="InterPro" id="IPR016899">
    <property type="entry name" value="mRNA_G-N7_MeTrfase_euk"/>
</dbReference>
<dbReference type="InterPro" id="IPR039753">
    <property type="entry name" value="RG7MT1"/>
</dbReference>
<dbReference type="InterPro" id="IPR029063">
    <property type="entry name" value="SAM-dependent_MTases_sf"/>
</dbReference>
<dbReference type="PANTHER" id="PTHR12189:SF2">
    <property type="entry name" value="MRNA CAP GUANINE-N7 METHYLTRANSFERASE"/>
    <property type="match status" value="1"/>
</dbReference>
<dbReference type="PANTHER" id="PTHR12189">
    <property type="entry name" value="MRNA GUANINE-7- METHYLTRANSFERASE"/>
    <property type="match status" value="1"/>
</dbReference>
<dbReference type="Pfam" id="PF03291">
    <property type="entry name" value="mRNA_G-N7_MeTrfase"/>
    <property type="match status" value="1"/>
</dbReference>
<dbReference type="PIRSF" id="PIRSF028762">
    <property type="entry name" value="ABD1"/>
    <property type="match status" value="1"/>
</dbReference>
<dbReference type="SUPFAM" id="SSF53335">
    <property type="entry name" value="S-adenosyl-L-methionine-dependent methyltransferases"/>
    <property type="match status" value="1"/>
</dbReference>
<dbReference type="PROSITE" id="PS51562">
    <property type="entry name" value="RNA_CAP0_MT"/>
    <property type="match status" value="1"/>
</dbReference>
<name>MCES_SCHPO</name>
<comment type="function">
    <text evidence="4">Responsible for methylating the 5'-cap structure of mRNAs.</text>
</comment>
<comment type="catalytic activity">
    <reaction evidence="1 2">
        <text>a 5'-end (5'-triphosphoguanosine)-ribonucleoside in mRNA + S-adenosyl-L-methionine = a 5'-end (N(7)-methyl 5'-triphosphoguanosine)-ribonucleoside in mRNA + S-adenosyl-L-homocysteine</text>
        <dbReference type="Rhea" id="RHEA:67008"/>
        <dbReference type="Rhea" id="RHEA-COMP:17166"/>
        <dbReference type="Rhea" id="RHEA-COMP:17167"/>
        <dbReference type="ChEBI" id="CHEBI:57856"/>
        <dbReference type="ChEBI" id="CHEBI:59789"/>
        <dbReference type="ChEBI" id="CHEBI:156461"/>
        <dbReference type="ChEBI" id="CHEBI:167617"/>
        <dbReference type="EC" id="2.1.1.56"/>
    </reaction>
</comment>
<comment type="subunit">
    <text evidence="5">Interacts with cdk9.</text>
</comment>
<comment type="interaction">
    <interactant intactId="EBI-7296037">
        <id>O74880</id>
    </interactant>
    <interactant intactId="EBI-443575">
        <id>O74627</id>
        <label>pch1</label>
    </interactant>
    <organismsDiffer>false</organismsDiffer>
    <experiments>2</experiments>
</comment>
<comment type="subcellular location">
    <subcellularLocation>
        <location evidence="6">Nucleus</location>
    </subcellularLocation>
</comment>
<comment type="similarity">
    <text evidence="2">Belongs to the class I-like SAM-binding methyltransferase superfamily. mRNA cap 0 methyltransferase family.</text>
</comment>
<evidence type="ECO:0000250" key="1">
    <source>
        <dbReference type="UniProtKB" id="O43148"/>
    </source>
</evidence>
<evidence type="ECO:0000255" key="2">
    <source>
        <dbReference type="PROSITE-ProRule" id="PRU00895"/>
    </source>
</evidence>
<evidence type="ECO:0000256" key="3">
    <source>
        <dbReference type="SAM" id="MobiDB-lite"/>
    </source>
</evidence>
<evidence type="ECO:0000269" key="4">
    <source>
    </source>
</evidence>
<evidence type="ECO:0000269" key="5">
    <source>
    </source>
</evidence>
<evidence type="ECO:0000269" key="6">
    <source>
    </source>
</evidence>
<gene>
    <name type="primary">pcm1</name>
    <name type="ORF">SPCC330.10</name>
</gene>
<feature type="chain" id="PRO_0000303915" description="mRNA cap guanine-N(7) methyltransferase">
    <location>
        <begin position="1"/>
        <end position="360"/>
    </location>
</feature>
<feature type="domain" description="mRNA cap 0 methyltransferase" evidence="2">
    <location>
        <begin position="83"/>
        <end position="358"/>
    </location>
</feature>
<feature type="region of interest" description="Disordered" evidence="3">
    <location>
        <begin position="1"/>
        <end position="62"/>
    </location>
</feature>
<feature type="compositionally biased region" description="Basic and acidic residues" evidence="3">
    <location>
        <begin position="7"/>
        <end position="19"/>
    </location>
</feature>
<feature type="binding site" evidence="2">
    <location>
        <begin position="92"/>
        <end position="93"/>
    </location>
    <ligand>
        <name>mRNA</name>
        <dbReference type="ChEBI" id="CHEBI:33699"/>
    </ligand>
    <ligandPart>
        <name>mRNA cap</name>
    </ligandPart>
</feature>
<feature type="binding site" evidence="2">
    <location>
        <position position="96"/>
    </location>
    <ligand>
        <name>S-adenosyl-L-methionine</name>
        <dbReference type="ChEBI" id="CHEBI:59789"/>
    </ligand>
</feature>
<feature type="binding site" evidence="2">
    <location>
        <position position="118"/>
    </location>
    <ligand>
        <name>S-adenosyl-L-methionine</name>
        <dbReference type="ChEBI" id="CHEBI:59789"/>
    </ligand>
</feature>
<feature type="binding site" evidence="2">
    <location>
        <position position="140"/>
    </location>
    <ligand>
        <name>S-adenosyl-L-methionine</name>
        <dbReference type="ChEBI" id="CHEBI:59789"/>
    </ligand>
</feature>
<feature type="binding site" evidence="1">
    <location>
        <position position="168"/>
    </location>
    <ligand>
        <name>S-adenosyl-L-methionine</name>
        <dbReference type="ChEBI" id="CHEBI:59789"/>
    </ligand>
</feature>
<feature type="binding site" evidence="1">
    <location>
        <position position="191"/>
    </location>
    <ligand>
        <name>S-adenosyl-L-methionine</name>
        <dbReference type="ChEBI" id="CHEBI:59789"/>
    </ligand>
</feature>
<feature type="binding site" evidence="1">
    <location>
        <position position="196"/>
    </location>
    <ligand>
        <name>S-adenosyl-L-methionine</name>
        <dbReference type="ChEBI" id="CHEBI:59789"/>
    </ligand>
</feature>
<feature type="site" description="mRNA cap binding" evidence="2">
    <location>
        <position position="121"/>
    </location>
</feature>
<feature type="site" description="mRNA cap binding" evidence="2">
    <location>
        <position position="127"/>
    </location>
</feature>
<feature type="site" description="mRNA cap binding" evidence="2">
    <location>
        <position position="152"/>
    </location>
</feature>
<feature type="site" description="mRNA cap binding" evidence="2">
    <location>
        <position position="195"/>
    </location>
</feature>
<feature type="site" description="mRNA cap binding" evidence="2">
    <location>
        <position position="283"/>
    </location>
</feature>
<feature type="site" description="mRNA cap binding" evidence="2">
    <location>
        <position position="350"/>
    </location>
</feature>
<reference key="1">
    <citation type="journal article" date="2002" name="Nature">
        <title>The genome sequence of Schizosaccharomyces pombe.</title>
        <authorList>
            <person name="Wood V."/>
            <person name="Gwilliam R."/>
            <person name="Rajandream M.A."/>
            <person name="Lyne M.H."/>
            <person name="Lyne R."/>
            <person name="Stewart A."/>
            <person name="Sgouros J.G."/>
            <person name="Peat N."/>
            <person name="Hayles J."/>
            <person name="Baker S.G."/>
            <person name="Basham D."/>
            <person name="Bowman S."/>
            <person name="Brooks K."/>
            <person name="Brown D."/>
            <person name="Brown S."/>
            <person name="Chillingworth T."/>
            <person name="Churcher C.M."/>
            <person name="Collins M."/>
            <person name="Connor R."/>
            <person name="Cronin A."/>
            <person name="Davis P."/>
            <person name="Feltwell T."/>
            <person name="Fraser A."/>
            <person name="Gentles S."/>
            <person name="Goble A."/>
            <person name="Hamlin N."/>
            <person name="Harris D.E."/>
            <person name="Hidalgo J."/>
            <person name="Hodgson G."/>
            <person name="Holroyd S."/>
            <person name="Hornsby T."/>
            <person name="Howarth S."/>
            <person name="Huckle E.J."/>
            <person name="Hunt S."/>
            <person name="Jagels K."/>
            <person name="James K.D."/>
            <person name="Jones L."/>
            <person name="Jones M."/>
            <person name="Leather S."/>
            <person name="McDonald S."/>
            <person name="McLean J."/>
            <person name="Mooney P."/>
            <person name="Moule S."/>
            <person name="Mungall K.L."/>
            <person name="Murphy L.D."/>
            <person name="Niblett D."/>
            <person name="Odell C."/>
            <person name="Oliver K."/>
            <person name="O'Neil S."/>
            <person name="Pearson D."/>
            <person name="Quail M.A."/>
            <person name="Rabbinowitsch E."/>
            <person name="Rutherford K.M."/>
            <person name="Rutter S."/>
            <person name="Saunders D."/>
            <person name="Seeger K."/>
            <person name="Sharp S."/>
            <person name="Skelton J."/>
            <person name="Simmonds M.N."/>
            <person name="Squares R."/>
            <person name="Squares S."/>
            <person name="Stevens K."/>
            <person name="Taylor K."/>
            <person name="Taylor R.G."/>
            <person name="Tivey A."/>
            <person name="Walsh S.V."/>
            <person name="Warren T."/>
            <person name="Whitehead S."/>
            <person name="Woodward J.R."/>
            <person name="Volckaert G."/>
            <person name="Aert R."/>
            <person name="Robben J."/>
            <person name="Grymonprez B."/>
            <person name="Weltjens I."/>
            <person name="Vanstreels E."/>
            <person name="Rieger M."/>
            <person name="Schaefer M."/>
            <person name="Mueller-Auer S."/>
            <person name="Gabel C."/>
            <person name="Fuchs M."/>
            <person name="Duesterhoeft A."/>
            <person name="Fritzc C."/>
            <person name="Holzer E."/>
            <person name="Moestl D."/>
            <person name="Hilbert H."/>
            <person name="Borzym K."/>
            <person name="Langer I."/>
            <person name="Beck A."/>
            <person name="Lehrach H."/>
            <person name="Reinhardt R."/>
            <person name="Pohl T.M."/>
            <person name="Eger P."/>
            <person name="Zimmermann W."/>
            <person name="Wedler H."/>
            <person name="Wambutt R."/>
            <person name="Purnelle B."/>
            <person name="Goffeau A."/>
            <person name="Cadieu E."/>
            <person name="Dreano S."/>
            <person name="Gloux S."/>
            <person name="Lelaure V."/>
            <person name="Mottier S."/>
            <person name="Galibert F."/>
            <person name="Aves S.J."/>
            <person name="Xiang Z."/>
            <person name="Hunt C."/>
            <person name="Moore K."/>
            <person name="Hurst S.M."/>
            <person name="Lucas M."/>
            <person name="Rochet M."/>
            <person name="Gaillardin C."/>
            <person name="Tallada V.A."/>
            <person name="Garzon A."/>
            <person name="Thode G."/>
            <person name="Daga R.R."/>
            <person name="Cruzado L."/>
            <person name="Jimenez J."/>
            <person name="Sanchez M."/>
            <person name="del Rey F."/>
            <person name="Benito J."/>
            <person name="Dominguez A."/>
            <person name="Revuelta J.L."/>
            <person name="Moreno S."/>
            <person name="Armstrong J."/>
            <person name="Forsburg S.L."/>
            <person name="Cerutti L."/>
            <person name="Lowe T."/>
            <person name="McCombie W.R."/>
            <person name="Paulsen I."/>
            <person name="Potashkin J."/>
            <person name="Shpakovski G.V."/>
            <person name="Ussery D."/>
            <person name="Barrell B.G."/>
            <person name="Nurse P."/>
        </authorList>
    </citation>
    <scope>NUCLEOTIDE SEQUENCE [LARGE SCALE GENOMIC DNA]</scope>
    <source>
        <strain>972 / ATCC 24843</strain>
    </source>
</reference>
<reference key="2">
    <citation type="journal article" date="2011" name="Science">
        <title>Comparative functional genomics of the fission yeasts.</title>
        <authorList>
            <person name="Rhind N."/>
            <person name="Chen Z."/>
            <person name="Yassour M."/>
            <person name="Thompson D.A."/>
            <person name="Haas B.J."/>
            <person name="Habib N."/>
            <person name="Wapinski I."/>
            <person name="Roy S."/>
            <person name="Lin M.F."/>
            <person name="Heiman D.I."/>
            <person name="Young S.K."/>
            <person name="Furuya K."/>
            <person name="Guo Y."/>
            <person name="Pidoux A."/>
            <person name="Chen H.M."/>
            <person name="Robbertse B."/>
            <person name="Goldberg J.M."/>
            <person name="Aoki K."/>
            <person name="Bayne E.H."/>
            <person name="Berlin A.M."/>
            <person name="Desjardins C.A."/>
            <person name="Dobbs E."/>
            <person name="Dukaj L."/>
            <person name="Fan L."/>
            <person name="FitzGerald M.G."/>
            <person name="French C."/>
            <person name="Gujja S."/>
            <person name="Hansen K."/>
            <person name="Keifenheim D."/>
            <person name="Levin J.Z."/>
            <person name="Mosher R.A."/>
            <person name="Mueller C.A."/>
            <person name="Pfiffner J."/>
            <person name="Priest M."/>
            <person name="Russ C."/>
            <person name="Smialowska A."/>
            <person name="Swoboda P."/>
            <person name="Sykes S.M."/>
            <person name="Vaughn M."/>
            <person name="Vengrova S."/>
            <person name="Yoder R."/>
            <person name="Zeng Q."/>
            <person name="Allshire R."/>
            <person name="Baulcombe D."/>
            <person name="Birren B.W."/>
            <person name="Brown W."/>
            <person name="Ekwall K."/>
            <person name="Kellis M."/>
            <person name="Leatherwood J."/>
            <person name="Levin H."/>
            <person name="Margalit H."/>
            <person name="Martienssen R."/>
            <person name="Nieduszynski C.A."/>
            <person name="Spatafora J.W."/>
            <person name="Friedman N."/>
            <person name="Dalgaard J.Z."/>
            <person name="Baumann P."/>
            <person name="Niki H."/>
            <person name="Regev A."/>
            <person name="Nusbaum C."/>
        </authorList>
    </citation>
    <scope>REVISION OF GENE MODEL</scope>
</reference>
<reference key="3">
    <citation type="journal article" date="2006" name="Mol. Cell. Biol.">
        <title>Cyclin-dependent kinase 9 (Cdk9) of fission yeast is activated by the CDK-activating kinase Csk1, overlaps functionally with the TFIIH-associated kinase Mcs6, and associates with the mRNA cap methyltransferase Pcm1 in vivo.</title>
        <authorList>
            <person name="Pei Y."/>
            <person name="Du H."/>
            <person name="Singer J."/>
            <person name="Saint Amour C."/>
            <person name="Granitto S."/>
            <person name="Shuman S."/>
            <person name="Fisher R.P."/>
        </authorList>
    </citation>
    <scope>PARTIAL PROTEIN SEQUENCE</scope>
    <scope>INTERACTION WITH CDK9</scope>
</reference>
<reference key="4">
    <citation type="journal article" date="1999" name="J. Biol. Chem.">
        <title>Characterization of human, Schizosaccharomyces pombe, and Candida albicans mRNA cap methyltransferases and complete replacement of the yeast capping apparatus by mammalian enzymes.</title>
        <authorList>
            <person name="Saha N."/>
            <person name="Schwer B."/>
            <person name="Shuman S."/>
        </authorList>
    </citation>
    <scope>FUNCTION</scope>
</reference>
<reference key="5">
    <citation type="journal article" date="2006" name="Nat. Biotechnol.">
        <title>ORFeome cloning and global analysis of protein localization in the fission yeast Schizosaccharomyces pombe.</title>
        <authorList>
            <person name="Matsuyama A."/>
            <person name="Arai R."/>
            <person name="Yashiroda Y."/>
            <person name="Shirai A."/>
            <person name="Kamata A."/>
            <person name="Sekido S."/>
            <person name="Kobayashi Y."/>
            <person name="Hashimoto A."/>
            <person name="Hamamoto M."/>
            <person name="Hiraoka Y."/>
            <person name="Horinouchi S."/>
            <person name="Yoshida M."/>
        </authorList>
    </citation>
    <scope>SUBCELLULAR LOCATION [LARGE SCALE ANALYSIS]</scope>
</reference>
<proteinExistence type="evidence at protein level"/>
<sequence length="360" mass="41441">MSSSNSRVHEEQPPTENRRYARPTAQMNRVIEQQPRRRDYFQNNDNSGRRGYNRHENNGNAQDVVRSHYNARPDLGYKKRQFSPIIQLKRFNNWIKSVLIQKFAPHASDYPILVLDMGCGKGGDLIKWDKAGIDGYIGIDIAEVSVNQAKKRYREMHASFDALFYAGDCFSSSINELLPPDQRKFDVVSLQFCMHYAFESEEKVRVLLGNVSKCLPRGGVMIGTIPNSDVIVKHIKMLKPGEKEWGNDIYKVRFPESPPRSFRPPYGIQYYFYLEDAVTDVPEYVVPFEAFRAVAEGYNLELIWVKPFLDILNEEKNSETYGPLMDRMKVVDNEGHRGIGGQEKEAAGFYLAFAFEKRGI</sequence>
<accession>O74880</accession>
<protein>
    <recommendedName>
        <fullName>mRNA cap guanine-N(7) methyltransferase</fullName>
        <ecNumber evidence="1">2.1.1.56</ecNumber>
    </recommendedName>
    <alternativeName>
        <fullName>mRNA (guanine-N(7))-methyltransferase</fullName>
    </alternativeName>
    <alternativeName>
        <fullName>mRNA cap methyltransferase</fullName>
    </alternativeName>
</protein>